<evidence type="ECO:0000255" key="1">
    <source>
        <dbReference type="HAMAP-Rule" id="MF_00596"/>
    </source>
</evidence>
<proteinExistence type="inferred from homology"/>
<reference key="1">
    <citation type="submission" date="2008-02" db="EMBL/GenBank/DDBJ databases">
        <title>Complete sequence of Yersinia pseudotuberculosis YPIII.</title>
        <authorList>
            <consortium name="US DOE Joint Genome Institute"/>
            <person name="Copeland A."/>
            <person name="Lucas S."/>
            <person name="Lapidus A."/>
            <person name="Glavina del Rio T."/>
            <person name="Dalin E."/>
            <person name="Tice H."/>
            <person name="Bruce D."/>
            <person name="Goodwin L."/>
            <person name="Pitluck S."/>
            <person name="Munk A.C."/>
            <person name="Brettin T."/>
            <person name="Detter J.C."/>
            <person name="Han C."/>
            <person name="Tapia R."/>
            <person name="Schmutz J."/>
            <person name="Larimer F."/>
            <person name="Land M."/>
            <person name="Hauser L."/>
            <person name="Challacombe J.F."/>
            <person name="Green L."/>
            <person name="Lindler L.E."/>
            <person name="Nikolich M.P."/>
            <person name="Richardson P."/>
        </authorList>
    </citation>
    <scope>NUCLEOTIDE SEQUENCE [LARGE SCALE GENOMIC DNA]</scope>
    <source>
        <strain>YPIII</strain>
    </source>
</reference>
<sequence>MRIEEGLKLGFKDVLIRPKRSTLKSRSEVALERQFTFKHSGWNWSGVPIIAANMDTVGTFRMAEVLASFDILTAVHKHYTLEQWAEFVKRSPESVLRHVMVSTGTSSADFDKMKQILALSPSLKFICIDVANGYSEHFVSFLQRAREACPDKVICAGNVVTGEMVEELILSGADIVKVGIGPGSVCTTRVKTGVGYPQLSAVIECADAAHGLGGQIVSDGGCSVPGDVAKAFGGGADFVMLGGMLAGHDECEGRVVEENGEKFMLFYGMSSESAMKRHVGGVAQYRAAEGKTVKLPLRGSVDNTVRDIMGGLRSACTYVGASHLKELTKRTTFIRVAEQENRVFGTD</sequence>
<name>GUAC_YERPY</name>
<organism>
    <name type="scientific">Yersinia pseudotuberculosis serotype O:3 (strain YPIII)</name>
    <dbReference type="NCBI Taxonomy" id="502800"/>
    <lineage>
        <taxon>Bacteria</taxon>
        <taxon>Pseudomonadati</taxon>
        <taxon>Pseudomonadota</taxon>
        <taxon>Gammaproteobacteria</taxon>
        <taxon>Enterobacterales</taxon>
        <taxon>Yersiniaceae</taxon>
        <taxon>Yersinia</taxon>
    </lineage>
</organism>
<protein>
    <recommendedName>
        <fullName evidence="1">GMP reductase</fullName>
        <ecNumber evidence="1">1.7.1.7</ecNumber>
    </recommendedName>
    <alternativeName>
        <fullName evidence="1">Guanosine 5'-monophosphate oxidoreductase</fullName>
        <shortName evidence="1">Guanosine monophosphate reductase</shortName>
    </alternativeName>
</protein>
<feature type="chain" id="PRO_1000129872" description="GMP reductase">
    <location>
        <begin position="1"/>
        <end position="347"/>
    </location>
</feature>
<feature type="active site" description="Thioimidate intermediate" evidence="1">
    <location>
        <position position="186"/>
    </location>
</feature>
<feature type="binding site" evidence="1">
    <location>
        <begin position="108"/>
        <end position="131"/>
    </location>
    <ligand>
        <name>NADP(+)</name>
        <dbReference type="ChEBI" id="CHEBI:58349"/>
    </ligand>
</feature>
<feature type="binding site" evidence="1">
    <location>
        <position position="181"/>
    </location>
    <ligand>
        <name>K(+)</name>
        <dbReference type="ChEBI" id="CHEBI:29103"/>
    </ligand>
</feature>
<feature type="binding site" evidence="1">
    <location>
        <position position="183"/>
    </location>
    <ligand>
        <name>K(+)</name>
        <dbReference type="ChEBI" id="CHEBI:29103"/>
    </ligand>
</feature>
<feature type="binding site" evidence="1">
    <location>
        <begin position="216"/>
        <end position="239"/>
    </location>
    <ligand>
        <name>NADP(+)</name>
        <dbReference type="ChEBI" id="CHEBI:58349"/>
    </ligand>
</feature>
<keyword id="KW-0479">Metal-binding</keyword>
<keyword id="KW-0521">NADP</keyword>
<keyword id="KW-0560">Oxidoreductase</keyword>
<keyword id="KW-0630">Potassium</keyword>
<gene>
    <name evidence="1" type="primary">guaC</name>
    <name type="ordered locus">YPK_3501</name>
</gene>
<accession>B1JK64</accession>
<dbReference type="EC" id="1.7.1.7" evidence="1"/>
<dbReference type="EMBL" id="CP000950">
    <property type="protein sequence ID" value="ACA69768.1"/>
    <property type="molecule type" value="Genomic_DNA"/>
</dbReference>
<dbReference type="RefSeq" id="WP_002209320.1">
    <property type="nucleotide sequence ID" value="NZ_CP009792.1"/>
</dbReference>
<dbReference type="SMR" id="B1JK64"/>
<dbReference type="KEGG" id="ypy:YPK_3501"/>
<dbReference type="PATRIC" id="fig|502800.11.peg.4244"/>
<dbReference type="GO" id="GO:0005829">
    <property type="term" value="C:cytosol"/>
    <property type="evidence" value="ECO:0007669"/>
    <property type="project" value="TreeGrafter"/>
</dbReference>
<dbReference type="GO" id="GO:1902560">
    <property type="term" value="C:GMP reductase complex"/>
    <property type="evidence" value="ECO:0007669"/>
    <property type="project" value="InterPro"/>
</dbReference>
<dbReference type="GO" id="GO:0003920">
    <property type="term" value="F:GMP reductase activity"/>
    <property type="evidence" value="ECO:0007669"/>
    <property type="project" value="UniProtKB-UniRule"/>
</dbReference>
<dbReference type="GO" id="GO:0046872">
    <property type="term" value="F:metal ion binding"/>
    <property type="evidence" value="ECO:0007669"/>
    <property type="project" value="UniProtKB-KW"/>
</dbReference>
<dbReference type="GO" id="GO:0006163">
    <property type="term" value="P:purine nucleotide metabolic process"/>
    <property type="evidence" value="ECO:0007669"/>
    <property type="project" value="UniProtKB-UniRule"/>
</dbReference>
<dbReference type="CDD" id="cd00381">
    <property type="entry name" value="IMPDH"/>
    <property type="match status" value="1"/>
</dbReference>
<dbReference type="FunFam" id="3.20.20.70:FF:000012">
    <property type="entry name" value="GMP reductase"/>
    <property type="match status" value="1"/>
</dbReference>
<dbReference type="Gene3D" id="3.20.20.70">
    <property type="entry name" value="Aldolase class I"/>
    <property type="match status" value="1"/>
</dbReference>
<dbReference type="HAMAP" id="MF_00596">
    <property type="entry name" value="GMP_reduct_type1"/>
    <property type="match status" value="1"/>
</dbReference>
<dbReference type="InterPro" id="IPR013785">
    <property type="entry name" value="Aldolase_TIM"/>
</dbReference>
<dbReference type="InterPro" id="IPR050139">
    <property type="entry name" value="GMP_reductase"/>
</dbReference>
<dbReference type="InterPro" id="IPR005993">
    <property type="entry name" value="GMPR"/>
</dbReference>
<dbReference type="InterPro" id="IPR015875">
    <property type="entry name" value="IMP_DH/GMP_Rdtase_CS"/>
</dbReference>
<dbReference type="InterPro" id="IPR001093">
    <property type="entry name" value="IMP_DH_GMPRt"/>
</dbReference>
<dbReference type="NCBIfam" id="TIGR01305">
    <property type="entry name" value="GMP_reduct_1"/>
    <property type="match status" value="1"/>
</dbReference>
<dbReference type="NCBIfam" id="NF003470">
    <property type="entry name" value="PRK05096.1"/>
    <property type="match status" value="1"/>
</dbReference>
<dbReference type="PANTHER" id="PTHR43170">
    <property type="entry name" value="GMP REDUCTASE"/>
    <property type="match status" value="1"/>
</dbReference>
<dbReference type="PANTHER" id="PTHR43170:SF5">
    <property type="entry name" value="GMP REDUCTASE"/>
    <property type="match status" value="1"/>
</dbReference>
<dbReference type="Pfam" id="PF00478">
    <property type="entry name" value="IMPDH"/>
    <property type="match status" value="1"/>
</dbReference>
<dbReference type="PIRSF" id="PIRSF000235">
    <property type="entry name" value="GMP_reductase"/>
    <property type="match status" value="1"/>
</dbReference>
<dbReference type="SMART" id="SM01240">
    <property type="entry name" value="IMPDH"/>
    <property type="match status" value="1"/>
</dbReference>
<dbReference type="SUPFAM" id="SSF51412">
    <property type="entry name" value="Inosine monophosphate dehydrogenase (IMPDH)"/>
    <property type="match status" value="1"/>
</dbReference>
<dbReference type="PROSITE" id="PS00487">
    <property type="entry name" value="IMP_DH_GMP_RED"/>
    <property type="match status" value="1"/>
</dbReference>
<comment type="function">
    <text evidence="1">Catalyzes the irreversible NADPH-dependent deamination of GMP to IMP. It functions in the conversion of nucleobase, nucleoside and nucleotide derivatives of G to A nucleotides, and in maintaining the intracellular balance of A and G nucleotides.</text>
</comment>
<comment type="catalytic activity">
    <reaction evidence="1">
        <text>IMP + NH4(+) + NADP(+) = GMP + NADPH + 2 H(+)</text>
        <dbReference type="Rhea" id="RHEA:17185"/>
        <dbReference type="ChEBI" id="CHEBI:15378"/>
        <dbReference type="ChEBI" id="CHEBI:28938"/>
        <dbReference type="ChEBI" id="CHEBI:57783"/>
        <dbReference type="ChEBI" id="CHEBI:58053"/>
        <dbReference type="ChEBI" id="CHEBI:58115"/>
        <dbReference type="ChEBI" id="CHEBI:58349"/>
        <dbReference type="EC" id="1.7.1.7"/>
    </reaction>
</comment>
<comment type="subunit">
    <text evidence="1">Homotetramer.</text>
</comment>
<comment type="similarity">
    <text evidence="1">Belongs to the IMPDH/GMPR family. GuaC type 1 subfamily.</text>
</comment>